<comment type="function">
    <text evidence="1">Binds to muscle nicotinic acetylcholine receptor (nAChR) and inhibit acetylcholine from binding to the receptor, thereby impairing neuromuscular transmission.</text>
</comment>
<comment type="subcellular location">
    <subcellularLocation>
        <location evidence="2">Secreted</location>
    </subcellularLocation>
</comment>
<comment type="tissue specificity">
    <text evidence="3">Expressed by the venom gland.</text>
</comment>
<comment type="toxic dose">
    <text evidence="2">LD(50) is 0.08 mg/kg by intravenous injection.</text>
</comment>
<comment type="similarity">
    <text evidence="3">Belongs to the three-finger toxin family. Short-chain subfamily. Type I alpha-neurotoxin sub-subfamily.</text>
</comment>
<evidence type="ECO:0000250" key="1">
    <source>
        <dbReference type="UniProtKB" id="P60775"/>
    </source>
</evidence>
<evidence type="ECO:0000269" key="2">
    <source>
    </source>
</evidence>
<evidence type="ECO:0000305" key="3"/>
<keyword id="KW-0008">Acetylcholine receptor inhibiting toxin</keyword>
<keyword id="KW-0903">Direct protein sequencing</keyword>
<keyword id="KW-1015">Disulfide bond</keyword>
<keyword id="KW-0872">Ion channel impairing toxin</keyword>
<keyword id="KW-0528">Neurotoxin</keyword>
<keyword id="KW-0629">Postsynaptic neurotoxin</keyword>
<keyword id="KW-0964">Secreted</keyword>
<keyword id="KW-0800">Toxin</keyword>
<dbReference type="PIR" id="A01692">
    <property type="entry name" value="N1NJ1C"/>
</dbReference>
<dbReference type="SMR" id="P01423"/>
<dbReference type="GO" id="GO:0005576">
    <property type="term" value="C:extracellular region"/>
    <property type="evidence" value="ECO:0007669"/>
    <property type="project" value="UniProtKB-SubCell"/>
</dbReference>
<dbReference type="GO" id="GO:0030550">
    <property type="term" value="F:acetylcholine receptor inhibitor activity"/>
    <property type="evidence" value="ECO:0007669"/>
    <property type="project" value="UniProtKB-KW"/>
</dbReference>
<dbReference type="GO" id="GO:0099106">
    <property type="term" value="F:ion channel regulator activity"/>
    <property type="evidence" value="ECO:0007669"/>
    <property type="project" value="UniProtKB-KW"/>
</dbReference>
<dbReference type="GO" id="GO:0090729">
    <property type="term" value="F:toxin activity"/>
    <property type="evidence" value="ECO:0007669"/>
    <property type="project" value="UniProtKB-KW"/>
</dbReference>
<dbReference type="CDD" id="cd00206">
    <property type="entry name" value="TFP_snake_toxin"/>
    <property type="match status" value="1"/>
</dbReference>
<dbReference type="FunFam" id="2.10.60.10:FF:000024">
    <property type="entry name" value="Cytotoxin 1"/>
    <property type="match status" value="1"/>
</dbReference>
<dbReference type="Gene3D" id="2.10.60.10">
    <property type="entry name" value="CD59"/>
    <property type="match status" value="1"/>
</dbReference>
<dbReference type="InterPro" id="IPR003571">
    <property type="entry name" value="Snake_3FTx"/>
</dbReference>
<dbReference type="InterPro" id="IPR045860">
    <property type="entry name" value="Snake_toxin-like_sf"/>
</dbReference>
<dbReference type="InterPro" id="IPR018354">
    <property type="entry name" value="Snake_toxin_con_site"/>
</dbReference>
<dbReference type="InterPro" id="IPR054131">
    <property type="entry name" value="Toxin_cobra-type"/>
</dbReference>
<dbReference type="Pfam" id="PF21947">
    <property type="entry name" value="Toxin_cobra-type"/>
    <property type="match status" value="1"/>
</dbReference>
<dbReference type="SUPFAM" id="SSF57302">
    <property type="entry name" value="Snake toxin-like"/>
    <property type="match status" value="1"/>
</dbReference>
<dbReference type="PROSITE" id="PS00272">
    <property type="entry name" value="SNAKE_TOXIN"/>
    <property type="match status" value="1"/>
</dbReference>
<name>3S12_NAJNI</name>
<proteinExistence type="evidence at protein level"/>
<feature type="chain" id="PRO_0000093606" description="Short neurotoxin 2" evidence="2">
    <location>
        <begin position="1"/>
        <end position="61"/>
    </location>
</feature>
<feature type="disulfide bond" evidence="2">
    <location>
        <begin position="3"/>
        <end position="23"/>
    </location>
</feature>
<feature type="disulfide bond" evidence="2">
    <location>
        <begin position="17"/>
        <end position="40"/>
    </location>
</feature>
<feature type="disulfide bond" evidence="2">
    <location>
        <begin position="42"/>
        <end position="53"/>
    </location>
</feature>
<feature type="disulfide bond" evidence="2">
    <location>
        <begin position="54"/>
        <end position="59"/>
    </location>
</feature>
<protein>
    <recommendedName>
        <fullName>Short neurotoxin 2</fullName>
    </recommendedName>
    <alternativeName>
        <fullName>Neurotoxin beta</fullName>
    </alternativeName>
</protein>
<sequence>MICHNQQSSQRPTIKTCPGETNCYKKRWRDHRGTIIERGCGCPSVKKGVGIYCCKTDKCNR</sequence>
<organism>
    <name type="scientific">Naja nivea</name>
    <name type="common">Cape cobra</name>
    <name type="synonym">Coluber niveus</name>
    <dbReference type="NCBI Taxonomy" id="8655"/>
    <lineage>
        <taxon>Eukaryota</taxon>
        <taxon>Metazoa</taxon>
        <taxon>Chordata</taxon>
        <taxon>Craniata</taxon>
        <taxon>Vertebrata</taxon>
        <taxon>Euteleostomi</taxon>
        <taxon>Lepidosauria</taxon>
        <taxon>Squamata</taxon>
        <taxon>Bifurcata</taxon>
        <taxon>Unidentata</taxon>
        <taxon>Episquamata</taxon>
        <taxon>Toxicofera</taxon>
        <taxon>Serpentes</taxon>
        <taxon>Colubroidea</taxon>
        <taxon>Elapidae</taxon>
        <taxon>Elapinae</taxon>
        <taxon>Naja</taxon>
    </lineage>
</organism>
<reference key="1">
    <citation type="journal article" date="1971" name="J. Biol. Chem.">
        <title>Snake venom toxins. The amino acid sequences of toxins alpha and beta from Naja nivea venom and the disulfide bonds of toxin alpha.</title>
        <authorList>
            <person name="Botes D.P."/>
        </authorList>
    </citation>
    <scope>PROTEIN SEQUENCE</scope>
    <scope>DISULFIDE BONDS</scope>
    <scope>TOXIC DOSE</scope>
    <scope>SUBCELLULAR LOCATION</scope>
    <source>
        <tissue>Venom</tissue>
    </source>
</reference>
<accession>P01423</accession>